<comment type="function">
    <text evidence="1">Key component of the proton channel; it plays a direct role in the translocation of protons across the membrane.</text>
</comment>
<comment type="subunit">
    <text evidence="1">F-type ATPases have 2 components, CF(1) - the catalytic core - and CF(0) - the membrane proton channel. CF(1) has five subunits: alpha(3), beta(3), gamma(1), delta(1), epsilon(1). CF(0) has three main subunits: a(1), b(2) and c(9-12). The alpha and beta chains form an alternating ring which encloses part of the gamma chain. CF(1) is attached to CF(0) by a central stalk formed by the gamma and epsilon chains, while a peripheral stalk is formed by the delta and b chains.</text>
</comment>
<comment type="subcellular location">
    <subcellularLocation>
        <location evidence="1">Cell inner membrane</location>
        <topology evidence="1">Multi-pass membrane protein</topology>
    </subcellularLocation>
</comment>
<comment type="similarity">
    <text evidence="1">Belongs to the ATPase A chain family.</text>
</comment>
<name>ATP6_MARN8</name>
<feature type="chain" id="PRO_0000362343" description="ATP synthase subunit a">
    <location>
        <begin position="1"/>
        <end position="284"/>
    </location>
</feature>
<feature type="transmembrane region" description="Helical" evidence="1">
    <location>
        <begin position="55"/>
        <end position="75"/>
    </location>
</feature>
<feature type="transmembrane region" description="Helical" evidence="1">
    <location>
        <begin position="116"/>
        <end position="136"/>
    </location>
</feature>
<feature type="transmembrane region" description="Helical" evidence="1">
    <location>
        <begin position="165"/>
        <end position="185"/>
    </location>
</feature>
<feature type="transmembrane region" description="Helical" evidence="1">
    <location>
        <begin position="196"/>
        <end position="216"/>
    </location>
</feature>
<feature type="transmembrane region" description="Helical" evidence="1">
    <location>
        <begin position="234"/>
        <end position="254"/>
    </location>
</feature>
<feature type="transmembrane region" description="Helical" evidence="1">
    <location>
        <begin position="255"/>
        <end position="275"/>
    </location>
</feature>
<protein>
    <recommendedName>
        <fullName evidence="1">ATP synthase subunit a</fullName>
    </recommendedName>
    <alternativeName>
        <fullName evidence="1">ATP synthase F0 sector subunit a</fullName>
    </alternativeName>
    <alternativeName>
        <fullName evidence="1">F-ATPase subunit 6</fullName>
    </alternativeName>
</protein>
<evidence type="ECO:0000255" key="1">
    <source>
        <dbReference type="HAMAP-Rule" id="MF_01393"/>
    </source>
</evidence>
<proteinExistence type="inferred from homology"/>
<gene>
    <name evidence="1" type="primary">atpB</name>
    <name type="ordered locus">Maqu_3881</name>
</gene>
<sequence length="284" mass="31897">MAADTPVEYIKHHLTNLTYGKLPEGYERADGSVVQEATWTFARTGQEATDMGFMAIHVDTLGWSIAMGILFLGLFRFVANRVTEGTPSGLQNLIEMTFEFVQGIVRDVFHGKNPLIAPLALTIFVWILLMNILKLIPIDYIPSIAHALGLEYFKIVPTTDPNATFGMSIGVFLLILFYSFKVKGVSGFSKELAFNPFNHWIMIPFNLLLEILALIIKPISLALRLFGNMYAGEVVFILIALLPLWIQWTLNVPWAIFHILVIPLQAFIFTVLTVVYLSAAHEDH</sequence>
<accession>A1U7I0</accession>
<dbReference type="EMBL" id="CP000514">
    <property type="protein sequence ID" value="ABM20949.1"/>
    <property type="molecule type" value="Genomic_DNA"/>
</dbReference>
<dbReference type="RefSeq" id="WP_011787282.1">
    <property type="nucleotide sequence ID" value="NC_008740.1"/>
</dbReference>
<dbReference type="SMR" id="A1U7I0"/>
<dbReference type="STRING" id="351348.Maqu_3881"/>
<dbReference type="GeneID" id="31823153"/>
<dbReference type="KEGG" id="maq:Maqu_3881"/>
<dbReference type="eggNOG" id="COG0356">
    <property type="taxonomic scope" value="Bacteria"/>
</dbReference>
<dbReference type="HOGENOM" id="CLU_041018_1_0_6"/>
<dbReference type="OrthoDB" id="9789241at2"/>
<dbReference type="Proteomes" id="UP000000998">
    <property type="component" value="Chromosome"/>
</dbReference>
<dbReference type="GO" id="GO:0005886">
    <property type="term" value="C:plasma membrane"/>
    <property type="evidence" value="ECO:0007669"/>
    <property type="project" value="UniProtKB-SubCell"/>
</dbReference>
<dbReference type="GO" id="GO:0045259">
    <property type="term" value="C:proton-transporting ATP synthase complex"/>
    <property type="evidence" value="ECO:0007669"/>
    <property type="project" value="UniProtKB-KW"/>
</dbReference>
<dbReference type="GO" id="GO:0046933">
    <property type="term" value="F:proton-transporting ATP synthase activity, rotational mechanism"/>
    <property type="evidence" value="ECO:0007669"/>
    <property type="project" value="UniProtKB-UniRule"/>
</dbReference>
<dbReference type="GO" id="GO:0042777">
    <property type="term" value="P:proton motive force-driven plasma membrane ATP synthesis"/>
    <property type="evidence" value="ECO:0007669"/>
    <property type="project" value="TreeGrafter"/>
</dbReference>
<dbReference type="CDD" id="cd00310">
    <property type="entry name" value="ATP-synt_Fo_a_6"/>
    <property type="match status" value="1"/>
</dbReference>
<dbReference type="FunFam" id="1.20.120.220:FF:000002">
    <property type="entry name" value="ATP synthase subunit a"/>
    <property type="match status" value="1"/>
</dbReference>
<dbReference type="Gene3D" id="1.20.120.220">
    <property type="entry name" value="ATP synthase, F0 complex, subunit A"/>
    <property type="match status" value="1"/>
</dbReference>
<dbReference type="HAMAP" id="MF_01393">
    <property type="entry name" value="ATP_synth_a_bact"/>
    <property type="match status" value="1"/>
</dbReference>
<dbReference type="InterPro" id="IPR045082">
    <property type="entry name" value="ATP_syn_F0_a_bact/chloroplast"/>
</dbReference>
<dbReference type="InterPro" id="IPR000568">
    <property type="entry name" value="ATP_synth_F0_asu"/>
</dbReference>
<dbReference type="InterPro" id="IPR023011">
    <property type="entry name" value="ATP_synth_F0_asu_AS"/>
</dbReference>
<dbReference type="InterPro" id="IPR035908">
    <property type="entry name" value="F0_ATP_A_sf"/>
</dbReference>
<dbReference type="NCBIfam" id="TIGR01131">
    <property type="entry name" value="ATP_synt_6_or_A"/>
    <property type="match status" value="1"/>
</dbReference>
<dbReference type="NCBIfam" id="NF004477">
    <property type="entry name" value="PRK05815.1-1"/>
    <property type="match status" value="1"/>
</dbReference>
<dbReference type="PANTHER" id="PTHR42823">
    <property type="entry name" value="ATP SYNTHASE SUBUNIT A, CHLOROPLASTIC"/>
    <property type="match status" value="1"/>
</dbReference>
<dbReference type="PANTHER" id="PTHR42823:SF3">
    <property type="entry name" value="ATP SYNTHASE SUBUNIT A, CHLOROPLASTIC"/>
    <property type="match status" value="1"/>
</dbReference>
<dbReference type="Pfam" id="PF00119">
    <property type="entry name" value="ATP-synt_A"/>
    <property type="match status" value="1"/>
</dbReference>
<dbReference type="PRINTS" id="PR00123">
    <property type="entry name" value="ATPASEA"/>
</dbReference>
<dbReference type="SUPFAM" id="SSF81336">
    <property type="entry name" value="F1F0 ATP synthase subunit A"/>
    <property type="match status" value="1"/>
</dbReference>
<dbReference type="PROSITE" id="PS00449">
    <property type="entry name" value="ATPASE_A"/>
    <property type="match status" value="1"/>
</dbReference>
<keyword id="KW-0066">ATP synthesis</keyword>
<keyword id="KW-0997">Cell inner membrane</keyword>
<keyword id="KW-1003">Cell membrane</keyword>
<keyword id="KW-0138">CF(0)</keyword>
<keyword id="KW-0375">Hydrogen ion transport</keyword>
<keyword id="KW-0406">Ion transport</keyword>
<keyword id="KW-0472">Membrane</keyword>
<keyword id="KW-0812">Transmembrane</keyword>
<keyword id="KW-1133">Transmembrane helix</keyword>
<keyword id="KW-0813">Transport</keyword>
<reference key="1">
    <citation type="journal article" date="2011" name="Appl. Environ. Microbiol.">
        <title>Genomic potential of Marinobacter aquaeolei, a biogeochemical 'opportunitroph'.</title>
        <authorList>
            <person name="Singer E."/>
            <person name="Webb E.A."/>
            <person name="Nelson W.C."/>
            <person name="Heidelberg J.F."/>
            <person name="Ivanova N."/>
            <person name="Pati A."/>
            <person name="Edwards K.J."/>
        </authorList>
    </citation>
    <scope>NUCLEOTIDE SEQUENCE [LARGE SCALE GENOMIC DNA]</scope>
    <source>
        <strain>ATCC 700491 / DSM 11845 / VT8</strain>
    </source>
</reference>
<organism>
    <name type="scientific">Marinobacter nauticus (strain ATCC 700491 / DSM 11845 / VT8)</name>
    <name type="common">Marinobacter aquaeolei</name>
    <dbReference type="NCBI Taxonomy" id="351348"/>
    <lineage>
        <taxon>Bacteria</taxon>
        <taxon>Pseudomonadati</taxon>
        <taxon>Pseudomonadota</taxon>
        <taxon>Gammaproteobacteria</taxon>
        <taxon>Pseudomonadales</taxon>
        <taxon>Marinobacteraceae</taxon>
        <taxon>Marinobacter</taxon>
    </lineage>
</organism>